<dbReference type="EC" id="2.8.1.1" evidence="1"/>
<dbReference type="EMBL" id="AY428647">
    <property type="protein sequence ID" value="AAR95692.1"/>
    <property type="molecule type" value="Genomic_DNA"/>
</dbReference>
<dbReference type="RefSeq" id="WP_005595720.1">
    <property type="nucleotide sequence ID" value="NZ_LS483358.1"/>
</dbReference>
<dbReference type="SMR" id="Q6T893"/>
<dbReference type="GeneID" id="48598224"/>
<dbReference type="GO" id="GO:0005737">
    <property type="term" value="C:cytoplasm"/>
    <property type="evidence" value="ECO:0007669"/>
    <property type="project" value="UniProtKB-SubCell"/>
</dbReference>
<dbReference type="GO" id="GO:0004792">
    <property type="term" value="F:thiosulfate-cyanide sulfurtransferase activity"/>
    <property type="evidence" value="ECO:0007669"/>
    <property type="project" value="UniProtKB-UniRule"/>
</dbReference>
<dbReference type="GO" id="GO:0006071">
    <property type="term" value="P:glycerol metabolic process"/>
    <property type="evidence" value="ECO:0007669"/>
    <property type="project" value="UniProtKB-UniRule"/>
</dbReference>
<dbReference type="CDD" id="cd01444">
    <property type="entry name" value="GlpE_ST"/>
    <property type="match status" value="1"/>
</dbReference>
<dbReference type="Gene3D" id="3.40.250.10">
    <property type="entry name" value="Rhodanese-like domain"/>
    <property type="match status" value="1"/>
</dbReference>
<dbReference type="HAMAP" id="MF_01009">
    <property type="entry name" value="Thiosulf_sulfurtr"/>
    <property type="match status" value="1"/>
</dbReference>
<dbReference type="InterPro" id="IPR050229">
    <property type="entry name" value="GlpE_sulfurtransferase"/>
</dbReference>
<dbReference type="InterPro" id="IPR001763">
    <property type="entry name" value="Rhodanese-like_dom"/>
</dbReference>
<dbReference type="InterPro" id="IPR036873">
    <property type="entry name" value="Rhodanese-like_dom_sf"/>
</dbReference>
<dbReference type="InterPro" id="IPR023695">
    <property type="entry name" value="Thiosulf_sulfurTrfase"/>
</dbReference>
<dbReference type="NCBIfam" id="NF001195">
    <property type="entry name" value="PRK00162.1"/>
    <property type="match status" value="1"/>
</dbReference>
<dbReference type="PANTHER" id="PTHR43031">
    <property type="entry name" value="FAD-DEPENDENT OXIDOREDUCTASE"/>
    <property type="match status" value="1"/>
</dbReference>
<dbReference type="PANTHER" id="PTHR43031:SF6">
    <property type="entry name" value="THIOSULFATE SULFURTRANSFERASE GLPE"/>
    <property type="match status" value="1"/>
</dbReference>
<dbReference type="Pfam" id="PF00581">
    <property type="entry name" value="Rhodanese"/>
    <property type="match status" value="1"/>
</dbReference>
<dbReference type="SMART" id="SM00450">
    <property type="entry name" value="RHOD"/>
    <property type="match status" value="1"/>
</dbReference>
<dbReference type="SUPFAM" id="SSF52821">
    <property type="entry name" value="Rhodanese/Cell cycle control phosphatase"/>
    <property type="match status" value="1"/>
</dbReference>
<dbReference type="PROSITE" id="PS50206">
    <property type="entry name" value="RHODANESE_3"/>
    <property type="match status" value="1"/>
</dbReference>
<gene>
    <name evidence="1" type="primary">glpE</name>
</gene>
<accession>Q6T893</accession>
<organism>
    <name type="scientific">Actinobacillus pleuropneumoniae</name>
    <name type="common">Haemophilus pleuropneumoniae</name>
    <dbReference type="NCBI Taxonomy" id="715"/>
    <lineage>
        <taxon>Bacteria</taxon>
        <taxon>Pseudomonadati</taxon>
        <taxon>Pseudomonadota</taxon>
        <taxon>Gammaproteobacteria</taxon>
        <taxon>Pasteurellales</taxon>
        <taxon>Pasteurellaceae</taxon>
        <taxon>Actinobacillus</taxon>
    </lineage>
</organism>
<proteinExistence type="inferred from homology"/>
<name>GLPE_ACTPL</name>
<feature type="chain" id="PRO_0000200547" description="Thiosulfate sulfurtransferase GlpE">
    <location>
        <begin position="1"/>
        <end position="108"/>
    </location>
</feature>
<feature type="domain" description="Rhodanese" evidence="1">
    <location>
        <begin position="18"/>
        <end position="106"/>
    </location>
</feature>
<feature type="active site" description="Cysteine persulfide intermediate" evidence="1">
    <location>
        <position position="66"/>
    </location>
</feature>
<reference key="1">
    <citation type="journal article" date="2004" name="Infect. Immun.">
        <title>Two TonB systems in Actinobacillus pleuropneumoniae: their roles in iron acquisition and virulence.</title>
        <authorList>
            <person name="Beddek A.J."/>
            <person name="Sheehan B.J."/>
            <person name="Bosse J.T."/>
            <person name="Rycroft A.N."/>
            <person name="Kroll J.S."/>
            <person name="Langford P.R."/>
        </authorList>
    </citation>
    <scope>NUCLEOTIDE SEQUENCE [GENOMIC DNA]</scope>
</reference>
<protein>
    <recommendedName>
        <fullName evidence="1">Thiosulfate sulfurtransferase GlpE</fullName>
        <ecNumber evidence="1">2.8.1.1</ecNumber>
    </recommendedName>
</protein>
<sequence length="108" mass="12403">MSETFTEISPHQAWELIENEGATLADIRDGRRYAYSHPQDAFHLTNESYGRFLDEVDYEEPVIVMCYHGVSSRNTAQFLVEQGFDRVYSVKGGFDGWERSGLPIETAY</sequence>
<keyword id="KW-0963">Cytoplasm</keyword>
<keyword id="KW-0808">Transferase</keyword>
<comment type="function">
    <text evidence="1">Transferase that catalyzes the transfer of sulfur from thiosulfate to thiophilic acceptors such as cyanide or dithiols. May function in a CysM-independent thiosulfate assimilation pathway by catalyzing the conversion of thiosulfate to sulfite, which can then be used for L-cysteine biosynthesis.</text>
</comment>
<comment type="catalytic activity">
    <reaction evidence="1">
        <text>thiosulfate + hydrogen cyanide = thiocyanate + sulfite + 2 H(+)</text>
        <dbReference type="Rhea" id="RHEA:16881"/>
        <dbReference type="ChEBI" id="CHEBI:15378"/>
        <dbReference type="ChEBI" id="CHEBI:17359"/>
        <dbReference type="ChEBI" id="CHEBI:18022"/>
        <dbReference type="ChEBI" id="CHEBI:18407"/>
        <dbReference type="ChEBI" id="CHEBI:33542"/>
        <dbReference type="EC" id="2.8.1.1"/>
    </reaction>
</comment>
<comment type="catalytic activity">
    <reaction evidence="1">
        <text>thiosulfate + [thioredoxin]-dithiol = [thioredoxin]-disulfide + hydrogen sulfide + sulfite + 2 H(+)</text>
        <dbReference type="Rhea" id="RHEA:83859"/>
        <dbReference type="Rhea" id="RHEA-COMP:10698"/>
        <dbReference type="Rhea" id="RHEA-COMP:10700"/>
        <dbReference type="ChEBI" id="CHEBI:15378"/>
        <dbReference type="ChEBI" id="CHEBI:17359"/>
        <dbReference type="ChEBI" id="CHEBI:29919"/>
        <dbReference type="ChEBI" id="CHEBI:29950"/>
        <dbReference type="ChEBI" id="CHEBI:33542"/>
        <dbReference type="ChEBI" id="CHEBI:50058"/>
    </reaction>
</comment>
<comment type="subcellular location">
    <subcellularLocation>
        <location evidence="1">Cytoplasm</location>
    </subcellularLocation>
</comment>
<comment type="similarity">
    <text evidence="1">Belongs to the GlpE family.</text>
</comment>
<evidence type="ECO:0000255" key="1">
    <source>
        <dbReference type="HAMAP-Rule" id="MF_01009"/>
    </source>
</evidence>